<reference key="1">
    <citation type="submission" date="2006-09" db="EMBL/GenBank/DDBJ databases">
        <authorList>
            <consortium name="The Klebsiella pneumonia Genome Sequencing Project"/>
            <person name="McClelland M."/>
            <person name="Sanderson E.K."/>
            <person name="Spieth J."/>
            <person name="Clifton W.S."/>
            <person name="Latreille P."/>
            <person name="Sabo A."/>
            <person name="Pepin K."/>
            <person name="Bhonagiri V."/>
            <person name="Porwollik S."/>
            <person name="Ali J."/>
            <person name="Wilson R.K."/>
        </authorList>
    </citation>
    <scope>NUCLEOTIDE SEQUENCE [LARGE SCALE GENOMIC DNA]</scope>
    <source>
        <strain>ATCC 700721 / MGH 78578</strain>
    </source>
</reference>
<gene>
    <name evidence="1" type="primary">gppA</name>
    <name type="ordered locus">KPN78578_42280</name>
    <name type="ORF">KPN_04280</name>
</gene>
<sequence length="499" mass="55010">MSSTSLYAAIDLGSNSFHMLVVREVAGSIQTLSRIKRKVRLAAGLNSDNTLSAEAMERGWQCLRLFAERLQDIPPTQIRVVATATLRLAVNAGEFLAKAQEILGTPVQVISGEEEARLIYQGVAHTTGGADQRLVVDIGGASTELVTGTGAQTTSLFSLSMGCVTWLERYFADRSLTKENFDLAEAAAREVLLPVADVLRYHGWKVCVGASGTVQALQEIMMAQGMDERITLAKLQQLKQRAIQCGRLEELEIEGLTLERALVFPSGLAILIAIFSELNIQCMTLAGGALREGLVYGMLHLSVEQDIRSRTLRNIQRRFMIDTEQAQRVGGLASHLLSQLDGSWELDPLSRDLLLSACALHEIGLSVDFKRAPQHAAYLVNNLDLPGFTPAQKKLIATLLLNQTNAIDLSSLHQQNAVPPRVAEHLCRLLRLAILFASRRRDDLLPAIQLTAQDEQLTLILPGNWLDEHPLGREMVDQECQWQSYVHWILRVASGDTLK</sequence>
<dbReference type="EC" id="3.6.1.40" evidence="1"/>
<dbReference type="EMBL" id="CP000647">
    <property type="protein sequence ID" value="ABR79652.1"/>
    <property type="molecule type" value="Genomic_DNA"/>
</dbReference>
<dbReference type="SMR" id="A6TGG8"/>
<dbReference type="STRING" id="272620.KPN_04280"/>
<dbReference type="PaxDb" id="272620-KPN_04280"/>
<dbReference type="EnsemblBacteria" id="ABR79652">
    <property type="protein sequence ID" value="ABR79652"/>
    <property type="gene ID" value="KPN_04280"/>
</dbReference>
<dbReference type="KEGG" id="kpn:KPN_04280"/>
<dbReference type="HOGENOM" id="CLU_025908_4_0_6"/>
<dbReference type="UniPathway" id="UPA00908">
    <property type="reaction ID" value="UER00885"/>
</dbReference>
<dbReference type="Proteomes" id="UP000000265">
    <property type="component" value="Chromosome"/>
</dbReference>
<dbReference type="GO" id="GO:0008894">
    <property type="term" value="F:guanosine-5'-triphosphate,3'-diphosphate diphosphatase activity"/>
    <property type="evidence" value="ECO:0007669"/>
    <property type="project" value="UniProtKB-UniRule"/>
</dbReference>
<dbReference type="GO" id="GO:0015974">
    <property type="term" value="P:guanosine pentaphosphate catabolic process"/>
    <property type="evidence" value="ECO:0007669"/>
    <property type="project" value="InterPro"/>
</dbReference>
<dbReference type="GO" id="GO:0015970">
    <property type="term" value="P:guanosine tetraphosphate biosynthetic process"/>
    <property type="evidence" value="ECO:0007669"/>
    <property type="project" value="UniProtKB-UniRule"/>
</dbReference>
<dbReference type="GO" id="GO:0015949">
    <property type="term" value="P:nucleobase-containing small molecule interconversion"/>
    <property type="evidence" value="ECO:0007669"/>
    <property type="project" value="TreeGrafter"/>
</dbReference>
<dbReference type="CDD" id="cd24117">
    <property type="entry name" value="ASKHA_NBD_EcGppA-like"/>
    <property type="match status" value="1"/>
</dbReference>
<dbReference type="FunFam" id="1.10.3210.10:FF:000004">
    <property type="entry name" value="Guanosine-5'-triphosphate,3'-diphosphate pyrophosphatase"/>
    <property type="match status" value="1"/>
</dbReference>
<dbReference type="FunFam" id="3.30.420.150:FF:000001">
    <property type="entry name" value="Guanosine-5'-triphosphate,3'-diphosphate pyrophosphatase"/>
    <property type="match status" value="1"/>
</dbReference>
<dbReference type="FunFam" id="3.30.420.40:FF:000023">
    <property type="entry name" value="Guanosine-5'-triphosphate,3'-diphosphate pyrophosphatase"/>
    <property type="match status" value="1"/>
</dbReference>
<dbReference type="Gene3D" id="3.30.420.40">
    <property type="match status" value="1"/>
</dbReference>
<dbReference type="Gene3D" id="3.30.420.150">
    <property type="entry name" value="Exopolyphosphatase. Domain 2"/>
    <property type="match status" value="1"/>
</dbReference>
<dbReference type="Gene3D" id="1.10.3210.10">
    <property type="entry name" value="Hypothetical protein af1432"/>
    <property type="match status" value="1"/>
</dbReference>
<dbReference type="HAMAP" id="MF_01550">
    <property type="entry name" value="GppA"/>
    <property type="match status" value="1"/>
</dbReference>
<dbReference type="InterPro" id="IPR043129">
    <property type="entry name" value="ATPase_NBD"/>
</dbReference>
<dbReference type="InterPro" id="IPR050273">
    <property type="entry name" value="GppA/Ppx_hydrolase"/>
</dbReference>
<dbReference type="InterPro" id="IPR023709">
    <property type="entry name" value="Guo-5TP_3DP_PyrP"/>
</dbReference>
<dbReference type="InterPro" id="IPR048950">
    <property type="entry name" value="Ppx_GppA_C"/>
</dbReference>
<dbReference type="InterPro" id="IPR003695">
    <property type="entry name" value="Ppx_GppA_N"/>
</dbReference>
<dbReference type="InterPro" id="IPR030673">
    <property type="entry name" value="PyroPPase_GppA_Ppx"/>
</dbReference>
<dbReference type="NCBIfam" id="NF008260">
    <property type="entry name" value="PRK11031.1"/>
    <property type="match status" value="1"/>
</dbReference>
<dbReference type="PANTHER" id="PTHR30005">
    <property type="entry name" value="EXOPOLYPHOSPHATASE"/>
    <property type="match status" value="1"/>
</dbReference>
<dbReference type="PANTHER" id="PTHR30005:SF0">
    <property type="entry name" value="RETROGRADE REGULATION PROTEIN 2"/>
    <property type="match status" value="1"/>
</dbReference>
<dbReference type="Pfam" id="PF02541">
    <property type="entry name" value="Ppx-GppA"/>
    <property type="match status" value="1"/>
</dbReference>
<dbReference type="Pfam" id="PF21447">
    <property type="entry name" value="Ppx-GppA_III"/>
    <property type="match status" value="1"/>
</dbReference>
<dbReference type="PIRSF" id="PIRSF001267">
    <property type="entry name" value="Pyrophosphatase_GppA_Ppx"/>
    <property type="match status" value="1"/>
</dbReference>
<dbReference type="SUPFAM" id="SSF53067">
    <property type="entry name" value="Actin-like ATPase domain"/>
    <property type="match status" value="2"/>
</dbReference>
<dbReference type="SUPFAM" id="SSF109604">
    <property type="entry name" value="HD-domain/PDEase-like"/>
    <property type="match status" value="1"/>
</dbReference>
<comment type="function">
    <text evidence="1">Catalyzes the conversion of pppGpp to ppGpp. Guanosine pentaphosphate (pppGpp) is a cytoplasmic signaling molecule which together with ppGpp controls the 'stringent response', an adaptive process that allows bacteria to respond to amino acid starvation, resulting in the coordinated regulation of numerous cellular activities.</text>
</comment>
<comment type="catalytic activity">
    <reaction evidence="1">
        <text>guanosine 3'-diphosphate 5'-triphosphate + H2O = guanosine 3',5'-bis(diphosphate) + phosphate + H(+)</text>
        <dbReference type="Rhea" id="RHEA:13073"/>
        <dbReference type="ChEBI" id="CHEBI:15377"/>
        <dbReference type="ChEBI" id="CHEBI:15378"/>
        <dbReference type="ChEBI" id="CHEBI:43474"/>
        <dbReference type="ChEBI" id="CHEBI:77828"/>
        <dbReference type="ChEBI" id="CHEBI:142410"/>
        <dbReference type="EC" id="3.6.1.40"/>
    </reaction>
</comment>
<comment type="pathway">
    <text evidence="1">Purine metabolism; ppGpp biosynthesis; ppGpp from GTP: step 2/2.</text>
</comment>
<comment type="similarity">
    <text evidence="1">Belongs to the GppA/Ppx family. GppA subfamily.</text>
</comment>
<protein>
    <recommendedName>
        <fullName evidence="1">Guanosine-5'-triphosphate,3'-diphosphate pyrophosphatase</fullName>
        <ecNumber evidence="1">3.6.1.40</ecNumber>
    </recommendedName>
    <alternativeName>
        <fullName evidence="1">Guanosine pentaphosphate phosphohydrolase</fullName>
    </alternativeName>
    <alternativeName>
        <fullName evidence="1">pppGpp-5'-phosphohydrolase</fullName>
    </alternativeName>
</protein>
<accession>A6TGG8</accession>
<name>GPPA_KLEP7</name>
<feature type="chain" id="PRO_1000068823" description="Guanosine-5'-triphosphate,3'-diphosphate pyrophosphatase">
    <location>
        <begin position="1"/>
        <end position="499"/>
    </location>
</feature>
<evidence type="ECO:0000255" key="1">
    <source>
        <dbReference type="HAMAP-Rule" id="MF_01550"/>
    </source>
</evidence>
<proteinExistence type="inferred from homology"/>
<organism>
    <name type="scientific">Klebsiella pneumoniae subsp. pneumoniae (strain ATCC 700721 / MGH 78578)</name>
    <dbReference type="NCBI Taxonomy" id="272620"/>
    <lineage>
        <taxon>Bacteria</taxon>
        <taxon>Pseudomonadati</taxon>
        <taxon>Pseudomonadota</taxon>
        <taxon>Gammaproteobacteria</taxon>
        <taxon>Enterobacterales</taxon>
        <taxon>Enterobacteriaceae</taxon>
        <taxon>Klebsiella/Raoultella group</taxon>
        <taxon>Klebsiella</taxon>
        <taxon>Klebsiella pneumoniae complex</taxon>
    </lineage>
</organism>
<keyword id="KW-0378">Hydrolase</keyword>